<proteinExistence type="inferred from homology"/>
<sequence>MLPSQSPAIFTVSRLNQTVRLLLEHEMGQVWISGEISNFTQPASGHWYFTLKDDTAQVRCAMFRNSNRRVTFRPQHGQQVLVRANITLYEPRGDYQIIVESMQPAGEGLLQQKYEQLKAKLQAECLFDQQYKKPLPSPAHCVGVITSKTGAALHDILHVLKRRDPSLPVIIYPTSVQGDDAPGQIVRAIELANQRNECDVLIVGRGGGSLEDLWSFNDERVARAIFASRIPVVSAVGHETDVTIADFVADLRAPTPSAAAEVVSRNQQELLRQVQSTRQRLEMAMDYYLANRTRRFTQIHHRLQQQHPQLRLARQQTMLERLQKRMSFALENQLKRTGQQQQRLTQRLNQQNPQPKIHRAQTRIQQLEYRLAETLRVQLSATRERFGNAVTHLEAVSPLSTLARGYSVTTATDGNVLKKVKQVKAGEMLTTRLEDGWIESEVKNIQPVKKSRKKVH</sequence>
<keyword id="KW-0963">Cytoplasm</keyword>
<keyword id="KW-0269">Exonuclease</keyword>
<keyword id="KW-0378">Hydrolase</keyword>
<keyword id="KW-0540">Nuclease</keyword>
<evidence type="ECO:0000255" key="1">
    <source>
        <dbReference type="HAMAP-Rule" id="MF_00378"/>
    </source>
</evidence>
<dbReference type="EC" id="3.1.11.6" evidence="1"/>
<dbReference type="EMBL" id="CP000036">
    <property type="protein sequence ID" value="ABB67077.1"/>
    <property type="molecule type" value="Genomic_DNA"/>
</dbReference>
<dbReference type="RefSeq" id="WP_000937885.1">
    <property type="nucleotide sequence ID" value="NC_007613.1"/>
</dbReference>
<dbReference type="SMR" id="Q31XY1"/>
<dbReference type="KEGG" id="sbo:SBO_2533"/>
<dbReference type="HOGENOM" id="CLU_023625_3_1_6"/>
<dbReference type="Proteomes" id="UP000007067">
    <property type="component" value="Chromosome"/>
</dbReference>
<dbReference type="GO" id="GO:0005737">
    <property type="term" value="C:cytoplasm"/>
    <property type="evidence" value="ECO:0007669"/>
    <property type="project" value="UniProtKB-SubCell"/>
</dbReference>
<dbReference type="GO" id="GO:0009318">
    <property type="term" value="C:exodeoxyribonuclease VII complex"/>
    <property type="evidence" value="ECO:0007669"/>
    <property type="project" value="InterPro"/>
</dbReference>
<dbReference type="GO" id="GO:0008855">
    <property type="term" value="F:exodeoxyribonuclease VII activity"/>
    <property type="evidence" value="ECO:0007669"/>
    <property type="project" value="UniProtKB-UniRule"/>
</dbReference>
<dbReference type="GO" id="GO:0003676">
    <property type="term" value="F:nucleic acid binding"/>
    <property type="evidence" value="ECO:0007669"/>
    <property type="project" value="InterPro"/>
</dbReference>
<dbReference type="GO" id="GO:0006308">
    <property type="term" value="P:DNA catabolic process"/>
    <property type="evidence" value="ECO:0007669"/>
    <property type="project" value="UniProtKB-UniRule"/>
</dbReference>
<dbReference type="CDD" id="cd04489">
    <property type="entry name" value="ExoVII_LU_OBF"/>
    <property type="match status" value="1"/>
</dbReference>
<dbReference type="HAMAP" id="MF_00378">
    <property type="entry name" value="Exonuc_7_L"/>
    <property type="match status" value="1"/>
</dbReference>
<dbReference type="InterPro" id="IPR003753">
    <property type="entry name" value="Exonuc_VII_L"/>
</dbReference>
<dbReference type="InterPro" id="IPR020579">
    <property type="entry name" value="Exonuc_VII_lsu_C"/>
</dbReference>
<dbReference type="InterPro" id="IPR025824">
    <property type="entry name" value="OB-fold_nuc-bd_dom"/>
</dbReference>
<dbReference type="NCBIfam" id="TIGR00237">
    <property type="entry name" value="xseA"/>
    <property type="match status" value="1"/>
</dbReference>
<dbReference type="PANTHER" id="PTHR30008">
    <property type="entry name" value="EXODEOXYRIBONUCLEASE 7 LARGE SUBUNIT"/>
    <property type="match status" value="1"/>
</dbReference>
<dbReference type="PANTHER" id="PTHR30008:SF0">
    <property type="entry name" value="EXODEOXYRIBONUCLEASE 7 LARGE SUBUNIT"/>
    <property type="match status" value="1"/>
</dbReference>
<dbReference type="Pfam" id="PF02601">
    <property type="entry name" value="Exonuc_VII_L"/>
    <property type="match status" value="1"/>
</dbReference>
<dbReference type="Pfam" id="PF13742">
    <property type="entry name" value="tRNA_anti_2"/>
    <property type="match status" value="1"/>
</dbReference>
<comment type="function">
    <text evidence="1">Bidirectionally degrades single-stranded DNA into large acid-insoluble oligonucleotides, which are then degraded further into small acid-soluble oligonucleotides.</text>
</comment>
<comment type="catalytic activity">
    <reaction evidence="1">
        <text>Exonucleolytic cleavage in either 5'- to 3'- or 3'- to 5'-direction to yield nucleoside 5'-phosphates.</text>
        <dbReference type="EC" id="3.1.11.6"/>
    </reaction>
</comment>
<comment type="subunit">
    <text evidence="1">Heterooligomer composed of large and small subunits.</text>
</comment>
<comment type="subcellular location">
    <subcellularLocation>
        <location evidence="1">Cytoplasm</location>
    </subcellularLocation>
</comment>
<comment type="similarity">
    <text evidence="1">Belongs to the XseA family.</text>
</comment>
<reference key="1">
    <citation type="journal article" date="2005" name="Nucleic Acids Res.">
        <title>Genome dynamics and diversity of Shigella species, the etiologic agents of bacillary dysentery.</title>
        <authorList>
            <person name="Yang F."/>
            <person name="Yang J."/>
            <person name="Zhang X."/>
            <person name="Chen L."/>
            <person name="Jiang Y."/>
            <person name="Yan Y."/>
            <person name="Tang X."/>
            <person name="Wang J."/>
            <person name="Xiong Z."/>
            <person name="Dong J."/>
            <person name="Xue Y."/>
            <person name="Zhu Y."/>
            <person name="Xu X."/>
            <person name="Sun L."/>
            <person name="Chen S."/>
            <person name="Nie H."/>
            <person name="Peng J."/>
            <person name="Xu J."/>
            <person name="Wang Y."/>
            <person name="Yuan Z."/>
            <person name="Wen Y."/>
            <person name="Yao Z."/>
            <person name="Shen Y."/>
            <person name="Qiang B."/>
            <person name="Hou Y."/>
            <person name="Yu J."/>
            <person name="Jin Q."/>
        </authorList>
    </citation>
    <scope>NUCLEOTIDE SEQUENCE [LARGE SCALE GENOMIC DNA]</scope>
    <source>
        <strain>Sb227</strain>
    </source>
</reference>
<feature type="chain" id="PRO_0000273688" description="Exodeoxyribonuclease 7 large subunit">
    <location>
        <begin position="1"/>
        <end position="456"/>
    </location>
</feature>
<organism>
    <name type="scientific">Shigella boydii serotype 4 (strain Sb227)</name>
    <dbReference type="NCBI Taxonomy" id="300268"/>
    <lineage>
        <taxon>Bacteria</taxon>
        <taxon>Pseudomonadati</taxon>
        <taxon>Pseudomonadota</taxon>
        <taxon>Gammaproteobacteria</taxon>
        <taxon>Enterobacterales</taxon>
        <taxon>Enterobacteriaceae</taxon>
        <taxon>Shigella</taxon>
    </lineage>
</organism>
<protein>
    <recommendedName>
        <fullName evidence="1">Exodeoxyribonuclease 7 large subunit</fullName>
        <ecNumber evidence="1">3.1.11.6</ecNumber>
    </recommendedName>
    <alternativeName>
        <fullName evidence="1">Exodeoxyribonuclease VII large subunit</fullName>
        <shortName evidence="1">Exonuclease VII large subunit</shortName>
    </alternativeName>
</protein>
<accession>Q31XY1</accession>
<gene>
    <name evidence="1" type="primary">xseA</name>
    <name type="ordered locus">SBO_2533</name>
</gene>
<name>EX7L_SHIBS</name>